<name>ISPE_THEFY</name>
<reference key="1">
    <citation type="journal article" date="2007" name="J. Bacteriol.">
        <title>Genome sequence and analysis of the soil cellulolytic actinomycete Thermobifida fusca YX.</title>
        <authorList>
            <person name="Lykidis A."/>
            <person name="Mavromatis K."/>
            <person name="Ivanova N."/>
            <person name="Anderson I."/>
            <person name="Land M."/>
            <person name="DiBartolo G."/>
            <person name="Martinez M."/>
            <person name="Lapidus A."/>
            <person name="Lucas S."/>
            <person name="Copeland A."/>
            <person name="Richardson P."/>
            <person name="Wilson D.B."/>
            <person name="Kyrpides N."/>
        </authorList>
    </citation>
    <scope>NUCLEOTIDE SEQUENCE [LARGE SCALE GENOMIC DNA]</scope>
    <source>
        <strain>YX</strain>
    </source>
</reference>
<gene>
    <name evidence="1" type="primary">ispE</name>
    <name type="ordered locus">Tfu_0407</name>
</gene>
<organism>
    <name type="scientific">Thermobifida fusca (strain YX)</name>
    <dbReference type="NCBI Taxonomy" id="269800"/>
    <lineage>
        <taxon>Bacteria</taxon>
        <taxon>Bacillati</taxon>
        <taxon>Actinomycetota</taxon>
        <taxon>Actinomycetes</taxon>
        <taxon>Streptosporangiales</taxon>
        <taxon>Nocardiopsidaceae</taxon>
        <taxon>Thermobifida</taxon>
    </lineage>
</organism>
<proteinExistence type="inferred from homology"/>
<evidence type="ECO:0000255" key="1">
    <source>
        <dbReference type="HAMAP-Rule" id="MF_00061"/>
    </source>
</evidence>
<comment type="function">
    <text evidence="1">Catalyzes the phosphorylation of the position 2 hydroxy group of 4-diphosphocytidyl-2C-methyl-D-erythritol.</text>
</comment>
<comment type="catalytic activity">
    <reaction evidence="1">
        <text>4-CDP-2-C-methyl-D-erythritol + ATP = 4-CDP-2-C-methyl-D-erythritol 2-phosphate + ADP + H(+)</text>
        <dbReference type="Rhea" id="RHEA:18437"/>
        <dbReference type="ChEBI" id="CHEBI:15378"/>
        <dbReference type="ChEBI" id="CHEBI:30616"/>
        <dbReference type="ChEBI" id="CHEBI:57823"/>
        <dbReference type="ChEBI" id="CHEBI:57919"/>
        <dbReference type="ChEBI" id="CHEBI:456216"/>
        <dbReference type="EC" id="2.7.1.148"/>
    </reaction>
</comment>
<comment type="pathway">
    <text evidence="1">Isoprenoid biosynthesis; isopentenyl diphosphate biosynthesis via DXP pathway; isopentenyl diphosphate from 1-deoxy-D-xylulose 5-phosphate: step 3/6.</text>
</comment>
<comment type="similarity">
    <text evidence="1">Belongs to the GHMP kinase family. IspE subfamily.</text>
</comment>
<feature type="chain" id="PRO_0000235147" description="4-diphosphocytidyl-2-C-methyl-D-erythritol kinase">
    <location>
        <begin position="1"/>
        <end position="307"/>
    </location>
</feature>
<feature type="active site" evidence="1">
    <location>
        <position position="14"/>
    </location>
</feature>
<feature type="active site" evidence="1">
    <location>
        <position position="149"/>
    </location>
</feature>
<feature type="binding site" evidence="1">
    <location>
        <begin position="107"/>
        <end position="117"/>
    </location>
    <ligand>
        <name>ATP</name>
        <dbReference type="ChEBI" id="CHEBI:30616"/>
    </ligand>
</feature>
<keyword id="KW-0067">ATP-binding</keyword>
<keyword id="KW-0414">Isoprene biosynthesis</keyword>
<keyword id="KW-0418">Kinase</keyword>
<keyword id="KW-0547">Nucleotide-binding</keyword>
<keyword id="KW-0808">Transferase</keyword>
<accession>Q47SX2</accession>
<protein>
    <recommendedName>
        <fullName evidence="1">4-diphosphocytidyl-2-C-methyl-D-erythritol kinase</fullName>
        <shortName evidence="1">CMK</shortName>
        <ecNumber evidence="1">2.7.1.148</ecNumber>
    </recommendedName>
    <alternativeName>
        <fullName evidence="1">4-(cytidine-5'-diphospho)-2-C-methyl-D-erythritol kinase</fullName>
    </alternativeName>
</protein>
<sequence length="307" mass="31099">MNAPTSVTVRVPAKVNLRLAVGPVRGDGYHGLVNVFHAVSLYDEVTVSPRSDLAPGQAVLSVDGERPDHVARVPLDDSNLAARAAALLARHVPHATGVHIHVHKAIPVAGGMAGGSADAAAALVACDALWEGGTPRERLLELAAELGSDVAFPLIGCTAVGTGRGEQLSPLPVQGTFHWVFALVDGGLSTTKVFAEYDRLRPDAPEPTLDDALVAALAAGDARRLGAALTNDLQPAALALRPELGDLLEAGRAAGALGALVSGSGPTCAFLAESADHARELAAALRASGTCADTVTAHGPVPGATVV</sequence>
<dbReference type="EC" id="2.7.1.148" evidence="1"/>
<dbReference type="EMBL" id="CP000088">
    <property type="protein sequence ID" value="AAZ54445.1"/>
    <property type="molecule type" value="Genomic_DNA"/>
</dbReference>
<dbReference type="RefSeq" id="WP_011290854.1">
    <property type="nucleotide sequence ID" value="NC_007333.1"/>
</dbReference>
<dbReference type="SMR" id="Q47SX2"/>
<dbReference type="STRING" id="269800.Tfu_0407"/>
<dbReference type="KEGG" id="tfu:Tfu_0407"/>
<dbReference type="eggNOG" id="COG1947">
    <property type="taxonomic scope" value="Bacteria"/>
</dbReference>
<dbReference type="HOGENOM" id="CLU_053057_1_1_11"/>
<dbReference type="OrthoDB" id="3173073at2"/>
<dbReference type="UniPathway" id="UPA00056">
    <property type="reaction ID" value="UER00094"/>
</dbReference>
<dbReference type="GO" id="GO:0050515">
    <property type="term" value="F:4-(cytidine 5'-diphospho)-2-C-methyl-D-erythritol kinase activity"/>
    <property type="evidence" value="ECO:0007669"/>
    <property type="project" value="UniProtKB-UniRule"/>
</dbReference>
<dbReference type="GO" id="GO:0005524">
    <property type="term" value="F:ATP binding"/>
    <property type="evidence" value="ECO:0007669"/>
    <property type="project" value="UniProtKB-UniRule"/>
</dbReference>
<dbReference type="GO" id="GO:0019288">
    <property type="term" value="P:isopentenyl diphosphate biosynthetic process, methylerythritol 4-phosphate pathway"/>
    <property type="evidence" value="ECO:0007669"/>
    <property type="project" value="UniProtKB-UniRule"/>
</dbReference>
<dbReference type="GO" id="GO:0016114">
    <property type="term" value="P:terpenoid biosynthetic process"/>
    <property type="evidence" value="ECO:0007669"/>
    <property type="project" value="InterPro"/>
</dbReference>
<dbReference type="Gene3D" id="3.30.230.10">
    <property type="match status" value="1"/>
</dbReference>
<dbReference type="Gene3D" id="3.30.70.890">
    <property type="entry name" value="GHMP kinase, C-terminal domain"/>
    <property type="match status" value="1"/>
</dbReference>
<dbReference type="HAMAP" id="MF_00061">
    <property type="entry name" value="IspE"/>
    <property type="match status" value="1"/>
</dbReference>
<dbReference type="InterPro" id="IPR013750">
    <property type="entry name" value="GHMP_kinase_C_dom"/>
</dbReference>
<dbReference type="InterPro" id="IPR036554">
    <property type="entry name" value="GHMP_kinase_C_sf"/>
</dbReference>
<dbReference type="InterPro" id="IPR006204">
    <property type="entry name" value="GHMP_kinase_N_dom"/>
</dbReference>
<dbReference type="InterPro" id="IPR004424">
    <property type="entry name" value="IspE"/>
</dbReference>
<dbReference type="InterPro" id="IPR020568">
    <property type="entry name" value="Ribosomal_Su5_D2-typ_SF"/>
</dbReference>
<dbReference type="InterPro" id="IPR014721">
    <property type="entry name" value="Ribsml_uS5_D2-typ_fold_subgr"/>
</dbReference>
<dbReference type="NCBIfam" id="TIGR00154">
    <property type="entry name" value="ispE"/>
    <property type="match status" value="1"/>
</dbReference>
<dbReference type="NCBIfam" id="NF002870">
    <property type="entry name" value="PRK03188.1"/>
    <property type="match status" value="1"/>
</dbReference>
<dbReference type="PANTHER" id="PTHR43527">
    <property type="entry name" value="4-DIPHOSPHOCYTIDYL-2-C-METHYL-D-ERYTHRITOL KINASE, CHLOROPLASTIC"/>
    <property type="match status" value="1"/>
</dbReference>
<dbReference type="PANTHER" id="PTHR43527:SF2">
    <property type="entry name" value="4-DIPHOSPHOCYTIDYL-2-C-METHYL-D-ERYTHRITOL KINASE, CHLOROPLASTIC"/>
    <property type="match status" value="1"/>
</dbReference>
<dbReference type="Pfam" id="PF08544">
    <property type="entry name" value="GHMP_kinases_C"/>
    <property type="match status" value="1"/>
</dbReference>
<dbReference type="Pfam" id="PF00288">
    <property type="entry name" value="GHMP_kinases_N"/>
    <property type="match status" value="1"/>
</dbReference>
<dbReference type="PIRSF" id="PIRSF010376">
    <property type="entry name" value="IspE"/>
    <property type="match status" value="1"/>
</dbReference>
<dbReference type="SUPFAM" id="SSF55060">
    <property type="entry name" value="GHMP Kinase, C-terminal domain"/>
    <property type="match status" value="1"/>
</dbReference>
<dbReference type="SUPFAM" id="SSF54211">
    <property type="entry name" value="Ribosomal protein S5 domain 2-like"/>
    <property type="match status" value="1"/>
</dbReference>